<proteinExistence type="inferred from homology"/>
<dbReference type="EC" id="6.3.3.3" evidence="1"/>
<dbReference type="EMBL" id="CP001489">
    <property type="protein sequence ID" value="ACO02307.1"/>
    <property type="molecule type" value="Genomic_DNA"/>
</dbReference>
<dbReference type="RefSeq" id="WP_004681846.1">
    <property type="nucleotide sequence ID" value="NC_012442.1"/>
</dbReference>
<dbReference type="SMR" id="C0RL24"/>
<dbReference type="GeneID" id="29595233"/>
<dbReference type="KEGG" id="bmi:BMEA_B0467"/>
<dbReference type="HOGENOM" id="CLU_072551_2_0_5"/>
<dbReference type="UniPathway" id="UPA00078">
    <property type="reaction ID" value="UER00161"/>
</dbReference>
<dbReference type="Proteomes" id="UP000001748">
    <property type="component" value="Chromosome II"/>
</dbReference>
<dbReference type="GO" id="GO:0005829">
    <property type="term" value="C:cytosol"/>
    <property type="evidence" value="ECO:0007669"/>
    <property type="project" value="TreeGrafter"/>
</dbReference>
<dbReference type="GO" id="GO:0005524">
    <property type="term" value="F:ATP binding"/>
    <property type="evidence" value="ECO:0007669"/>
    <property type="project" value="UniProtKB-UniRule"/>
</dbReference>
<dbReference type="GO" id="GO:0004141">
    <property type="term" value="F:dethiobiotin synthase activity"/>
    <property type="evidence" value="ECO:0007669"/>
    <property type="project" value="UniProtKB-UniRule"/>
</dbReference>
<dbReference type="GO" id="GO:0000287">
    <property type="term" value="F:magnesium ion binding"/>
    <property type="evidence" value="ECO:0007669"/>
    <property type="project" value="UniProtKB-UniRule"/>
</dbReference>
<dbReference type="GO" id="GO:0009102">
    <property type="term" value="P:biotin biosynthetic process"/>
    <property type="evidence" value="ECO:0007669"/>
    <property type="project" value="UniProtKB-UniRule"/>
</dbReference>
<dbReference type="CDD" id="cd03109">
    <property type="entry name" value="DTBS"/>
    <property type="match status" value="1"/>
</dbReference>
<dbReference type="Gene3D" id="3.40.50.300">
    <property type="entry name" value="P-loop containing nucleotide triphosphate hydrolases"/>
    <property type="match status" value="1"/>
</dbReference>
<dbReference type="HAMAP" id="MF_00336">
    <property type="entry name" value="BioD"/>
    <property type="match status" value="1"/>
</dbReference>
<dbReference type="InterPro" id="IPR004472">
    <property type="entry name" value="DTB_synth_BioD"/>
</dbReference>
<dbReference type="InterPro" id="IPR027417">
    <property type="entry name" value="P-loop_NTPase"/>
</dbReference>
<dbReference type="NCBIfam" id="TIGR00347">
    <property type="entry name" value="bioD"/>
    <property type="match status" value="1"/>
</dbReference>
<dbReference type="PANTHER" id="PTHR43210:SF2">
    <property type="entry name" value="ATP-DEPENDENT DETHIOBIOTIN SYNTHETASE BIOD 2"/>
    <property type="match status" value="1"/>
</dbReference>
<dbReference type="PANTHER" id="PTHR43210">
    <property type="entry name" value="DETHIOBIOTIN SYNTHETASE"/>
    <property type="match status" value="1"/>
</dbReference>
<dbReference type="Pfam" id="PF13500">
    <property type="entry name" value="AAA_26"/>
    <property type="match status" value="1"/>
</dbReference>
<dbReference type="PIRSF" id="PIRSF006755">
    <property type="entry name" value="DTB_synth"/>
    <property type="match status" value="1"/>
</dbReference>
<dbReference type="SUPFAM" id="SSF52540">
    <property type="entry name" value="P-loop containing nucleoside triphosphate hydrolases"/>
    <property type="match status" value="1"/>
</dbReference>
<comment type="function">
    <text evidence="1">Catalyzes a mechanistically unusual reaction, the ATP-dependent insertion of CO2 between the N7 and N8 nitrogen atoms of 7,8-diaminopelargonic acid (DAPA, also called 7,8-diammoniononanoate) to form a ureido ring.</text>
</comment>
<comment type="catalytic activity">
    <reaction evidence="1">
        <text>(7R,8S)-7,8-diammoniononanoate + CO2 + ATP = (4R,5S)-dethiobiotin + ADP + phosphate + 3 H(+)</text>
        <dbReference type="Rhea" id="RHEA:15805"/>
        <dbReference type="ChEBI" id="CHEBI:15378"/>
        <dbReference type="ChEBI" id="CHEBI:16526"/>
        <dbReference type="ChEBI" id="CHEBI:30616"/>
        <dbReference type="ChEBI" id="CHEBI:43474"/>
        <dbReference type="ChEBI" id="CHEBI:149469"/>
        <dbReference type="ChEBI" id="CHEBI:149473"/>
        <dbReference type="ChEBI" id="CHEBI:456216"/>
        <dbReference type="EC" id="6.3.3.3"/>
    </reaction>
</comment>
<comment type="cofactor">
    <cofactor evidence="1">
        <name>Mg(2+)</name>
        <dbReference type="ChEBI" id="CHEBI:18420"/>
    </cofactor>
</comment>
<comment type="pathway">
    <text evidence="1">Cofactor biosynthesis; biotin biosynthesis; biotin from 7,8-diaminononanoate: step 1/2.</text>
</comment>
<comment type="subunit">
    <text evidence="1">Homodimer.</text>
</comment>
<comment type="subcellular location">
    <subcellularLocation>
        <location evidence="1">Cytoplasm</location>
    </subcellularLocation>
</comment>
<comment type="similarity">
    <text evidence="1">Belongs to the dethiobiotin synthetase family.</text>
</comment>
<feature type="chain" id="PRO_1000133204" description="ATP-dependent dethiobiotin synthetase BioD">
    <location>
        <begin position="1"/>
        <end position="212"/>
    </location>
</feature>
<feature type="active site" evidence="1">
    <location>
        <position position="33"/>
    </location>
</feature>
<feature type="binding site" evidence="1">
    <location>
        <begin position="13"/>
        <end position="18"/>
    </location>
    <ligand>
        <name>ATP</name>
        <dbReference type="ChEBI" id="CHEBI:30616"/>
    </ligand>
</feature>
<feature type="binding site" evidence="1">
    <location>
        <position position="17"/>
    </location>
    <ligand>
        <name>Mg(2+)</name>
        <dbReference type="ChEBI" id="CHEBI:18420"/>
    </ligand>
</feature>
<feature type="binding site" evidence="1">
    <location>
        <position position="37"/>
    </location>
    <ligand>
        <name>substrate</name>
    </ligand>
</feature>
<feature type="binding site" evidence="1">
    <location>
        <begin position="100"/>
        <end position="103"/>
    </location>
    <ligand>
        <name>ATP</name>
        <dbReference type="ChEBI" id="CHEBI:30616"/>
    </ligand>
</feature>
<feature type="binding site" evidence="1">
    <location>
        <position position="100"/>
    </location>
    <ligand>
        <name>Mg(2+)</name>
        <dbReference type="ChEBI" id="CHEBI:18420"/>
    </ligand>
</feature>
<feature type="binding site" evidence="1">
    <location>
        <begin position="184"/>
        <end position="186"/>
    </location>
    <ligand>
        <name>ATP</name>
        <dbReference type="ChEBI" id="CHEBI:30616"/>
    </ligand>
</feature>
<accession>C0RL24</accession>
<reference key="1">
    <citation type="submission" date="2009-03" db="EMBL/GenBank/DDBJ databases">
        <title>Brucella melitensis ATCC 23457 whole genome shotgun sequencing project.</title>
        <authorList>
            <person name="Setubal J.C."/>
            <person name="Boyle S."/>
            <person name="Crasta O.R."/>
            <person name="Gillespie J.J."/>
            <person name="Kenyon R.W."/>
            <person name="Lu J."/>
            <person name="Mane S."/>
            <person name="Nagrani S."/>
            <person name="Shallom J.M."/>
            <person name="Shallom S."/>
            <person name="Shukla M."/>
            <person name="Snyder E.E."/>
            <person name="Sobral B.W."/>
            <person name="Wattam A.R."/>
            <person name="Will R."/>
            <person name="Williams K."/>
            <person name="Yoo H."/>
            <person name="Munk C."/>
            <person name="Tapia R."/>
            <person name="Han C."/>
            <person name="Detter J.C."/>
            <person name="Bruce D."/>
            <person name="Brettin T.S."/>
        </authorList>
    </citation>
    <scope>NUCLEOTIDE SEQUENCE [LARGE SCALE GENOMIC DNA]</scope>
    <source>
        <strain>ATCC 23457</strain>
    </source>
</reference>
<evidence type="ECO:0000255" key="1">
    <source>
        <dbReference type="HAMAP-Rule" id="MF_00336"/>
    </source>
</evidence>
<protein>
    <recommendedName>
        <fullName evidence="1">ATP-dependent dethiobiotin synthetase BioD</fullName>
        <ecNumber evidence="1">6.3.3.3</ecNumber>
    </recommendedName>
    <alternativeName>
        <fullName evidence="1">DTB synthetase</fullName>
        <shortName evidence="1">DTBS</shortName>
    </alternativeName>
    <alternativeName>
        <fullName evidence="1">Dethiobiotin synthase</fullName>
    </alternativeName>
</protein>
<name>BIOD_BRUMB</name>
<sequence length="212" mass="23017">MNSRLIVTGTDTGIGKTVFSAALCHALGAVYWKPVQSGLEEETDSEIVARLAQASPQRILPEAWRLNTPASPHLSARLDGVEIRPEEMHIPATSLPLVIEGAGGLLVPLNDKTLFADLFAIWRIPAILCARAALGTINHTLLSLEAMRSRDIPVLGVAFIGEANEDTETTIAHLGRVKRLGRLPLLDDLSPEKLHHSFARNFHIDDFAGVAR</sequence>
<gene>
    <name evidence="1" type="primary">bioD</name>
    <name type="ordered locus">BMEA_B0467</name>
</gene>
<keyword id="KW-0067">ATP-binding</keyword>
<keyword id="KW-0093">Biotin biosynthesis</keyword>
<keyword id="KW-0963">Cytoplasm</keyword>
<keyword id="KW-0436">Ligase</keyword>
<keyword id="KW-0460">Magnesium</keyword>
<keyword id="KW-0479">Metal-binding</keyword>
<keyword id="KW-0547">Nucleotide-binding</keyword>
<organism>
    <name type="scientific">Brucella melitensis biotype 2 (strain ATCC 23457)</name>
    <dbReference type="NCBI Taxonomy" id="546272"/>
    <lineage>
        <taxon>Bacteria</taxon>
        <taxon>Pseudomonadati</taxon>
        <taxon>Pseudomonadota</taxon>
        <taxon>Alphaproteobacteria</taxon>
        <taxon>Hyphomicrobiales</taxon>
        <taxon>Brucellaceae</taxon>
        <taxon>Brucella/Ochrobactrum group</taxon>
        <taxon>Brucella</taxon>
    </lineage>
</organism>